<keyword id="KW-0068">Autocatalytic cleavage</keyword>
<keyword id="KW-0210">Decarboxylase</keyword>
<keyword id="KW-0456">Lyase</keyword>
<keyword id="KW-0620">Polyamine biosynthesis</keyword>
<keyword id="KW-0670">Pyruvate</keyword>
<keyword id="KW-1185">Reference proteome</keyword>
<keyword id="KW-0949">S-adenosyl-L-methionine</keyword>
<keyword id="KW-0704">Schiff base</keyword>
<keyword id="KW-0745">Spermidine biosynthesis</keyword>
<keyword id="KW-0865">Zymogen</keyword>
<feature type="chain" id="PRO_0000030155" description="S-adenosylmethionine decarboxylase beta chain" evidence="1">
    <location>
        <begin position="1"/>
        <end position="68"/>
    </location>
</feature>
<feature type="chain" id="PRO_0000030156" description="S-adenosylmethionine decarboxylase alpha chain" evidence="1">
    <location>
        <begin position="69"/>
        <end position="122"/>
    </location>
</feature>
<feature type="active site" description="Schiff-base intermediate with substrate; via pyruvic acid" evidence="1">
    <location>
        <position position="69"/>
    </location>
</feature>
<feature type="active site" description="Proton acceptor; for processing activity" evidence="1">
    <location>
        <position position="74"/>
    </location>
</feature>
<feature type="active site" description="Proton donor; for catalytic activity" evidence="1">
    <location>
        <position position="89"/>
    </location>
</feature>
<feature type="site" description="Cleavage (non-hydrolytic); by autolysis" evidence="1">
    <location>
        <begin position="68"/>
        <end position="69"/>
    </location>
</feature>
<feature type="modified residue" description="Pyruvic acid (Ser); by autocatalysis" evidence="1">
    <location>
        <position position="69"/>
    </location>
</feature>
<comment type="function">
    <text evidence="1">Catalyzes the decarboxylation of S-adenosylmethionine to S-adenosylmethioninamine (dcAdoMet), the propylamine donor required for the synthesis of the polyamines spermine and spermidine from the diamine putrescine.</text>
</comment>
<comment type="catalytic activity">
    <reaction evidence="1">
        <text>S-adenosyl-L-methionine + H(+) = S-adenosyl 3-(methylsulfanyl)propylamine + CO2</text>
        <dbReference type="Rhea" id="RHEA:15981"/>
        <dbReference type="ChEBI" id="CHEBI:15378"/>
        <dbReference type="ChEBI" id="CHEBI:16526"/>
        <dbReference type="ChEBI" id="CHEBI:57443"/>
        <dbReference type="ChEBI" id="CHEBI:59789"/>
        <dbReference type="EC" id="4.1.1.50"/>
    </reaction>
</comment>
<comment type="cofactor">
    <cofactor evidence="1">
        <name>pyruvate</name>
        <dbReference type="ChEBI" id="CHEBI:15361"/>
    </cofactor>
    <text evidence="1">Binds 1 pyruvoyl group covalently per subunit.</text>
</comment>
<comment type="pathway">
    <text evidence="1">Amine and polyamine biosynthesis; S-adenosylmethioninamine biosynthesis; S-adenosylmethioninamine from S-adenosyl-L-methionine: step 1/1.</text>
</comment>
<comment type="subunit">
    <text evidence="1">Heterotetramer of two alpha and two beta chains arranged as a dimer of alpha/beta heterodimers.</text>
</comment>
<comment type="PTM">
    <text evidence="1">Is synthesized initially as an inactive proenzyme. Formation of the active enzyme involves a self-maturation process in which the active site pyruvoyl group is generated from an internal serine residue via an autocatalytic post-translational modification. Two non-identical subunits are generated from the proenzyme in this reaction, and the pyruvate is formed at the N-terminus of the alpha chain, which is derived from the carboxyl end of the proenzyme. The post-translation cleavage follows an unusual pathway, termed non-hydrolytic serinolysis, in which the side chain hydroxyl group of the serine supplies its oxygen atom to form the C-terminus of the beta chain, while the remainder of the serine residue undergoes an oxidative deamination to produce ammonia and the pyruvoyl group blocking the N-terminus of the alpha chain.</text>
</comment>
<comment type="similarity">
    <text evidence="1">Belongs to the prokaryotic AdoMetDC family. Type 1 subfamily.</text>
</comment>
<sequence>MMGVVSTPKVVGRQVYGSLYECDNEVLKDVKRLEEIVKEAAKVGNMTLLDIKSWKIGEGVSVVAIVLESHITIHTWPEYNFATVDVYSCGAHTDPYKAFMYIVNELKAKRYTINEADRSSEF</sequence>
<organism>
    <name type="scientific">Sulfurisphaera tokodaii (strain DSM 16993 / JCM 10545 / NBRC 100140 / 7)</name>
    <name type="common">Sulfolobus tokodaii</name>
    <dbReference type="NCBI Taxonomy" id="273063"/>
    <lineage>
        <taxon>Archaea</taxon>
        <taxon>Thermoproteota</taxon>
        <taxon>Thermoprotei</taxon>
        <taxon>Sulfolobales</taxon>
        <taxon>Sulfolobaceae</taxon>
        <taxon>Sulfurisphaera</taxon>
    </lineage>
</organism>
<reference key="1">
    <citation type="journal article" date="2001" name="DNA Res.">
        <title>Complete genome sequence of an aerobic thermoacidophilic Crenarchaeon, Sulfolobus tokodaii strain7.</title>
        <authorList>
            <person name="Kawarabayasi Y."/>
            <person name="Hino Y."/>
            <person name="Horikawa H."/>
            <person name="Jin-no K."/>
            <person name="Takahashi M."/>
            <person name="Sekine M."/>
            <person name="Baba S."/>
            <person name="Ankai A."/>
            <person name="Kosugi H."/>
            <person name="Hosoyama A."/>
            <person name="Fukui S."/>
            <person name="Nagai Y."/>
            <person name="Nishijima K."/>
            <person name="Otsuka R."/>
            <person name="Nakazawa H."/>
            <person name="Takamiya M."/>
            <person name="Kato Y."/>
            <person name="Yoshizawa T."/>
            <person name="Tanaka T."/>
            <person name="Kudoh Y."/>
            <person name="Yamazaki J."/>
            <person name="Kushida N."/>
            <person name="Oguchi A."/>
            <person name="Aoki K."/>
            <person name="Masuda S."/>
            <person name="Yanagii M."/>
            <person name="Nishimura M."/>
            <person name="Yamagishi A."/>
            <person name="Oshima T."/>
            <person name="Kikuchi H."/>
        </authorList>
    </citation>
    <scope>NUCLEOTIDE SEQUENCE [LARGE SCALE GENOMIC DNA]</scope>
    <source>
        <strain>DSM 16993 / JCM 10545 / NBRC 100140 / 7</strain>
    </source>
</reference>
<protein>
    <recommendedName>
        <fullName evidence="1">S-adenosylmethionine decarboxylase proenzyme</fullName>
        <shortName evidence="1">AdoMetDC</shortName>
        <shortName evidence="1">SAMDC</shortName>
        <ecNumber evidence="1">4.1.1.50</ecNumber>
    </recommendedName>
    <component>
        <recommendedName>
            <fullName evidence="1">S-adenosylmethionine decarboxylase beta chain</fullName>
        </recommendedName>
    </component>
    <component>
        <recommendedName>
            <fullName evidence="1">S-adenosylmethionine decarboxylase alpha chain</fullName>
        </recommendedName>
    </component>
</protein>
<gene>
    <name evidence="1" type="primary">speH</name>
    <name type="ordered locus">STK_14520</name>
</gene>
<proteinExistence type="inferred from homology"/>
<accession>Q971A0</accession>
<accession>F9VND8</accession>
<dbReference type="EC" id="4.1.1.50" evidence="1"/>
<dbReference type="EMBL" id="BA000023">
    <property type="protein sequence ID" value="BAK54584.1"/>
    <property type="molecule type" value="Genomic_DNA"/>
</dbReference>
<dbReference type="SMR" id="Q971A0"/>
<dbReference type="STRING" id="273063.STK_14520"/>
<dbReference type="KEGG" id="sto:STK_14520"/>
<dbReference type="PATRIC" id="fig|273063.9.peg.1656"/>
<dbReference type="eggNOG" id="arCOG00279">
    <property type="taxonomic scope" value="Archaea"/>
</dbReference>
<dbReference type="OrthoDB" id="114016at2157"/>
<dbReference type="UniPathway" id="UPA00331">
    <property type="reaction ID" value="UER00451"/>
</dbReference>
<dbReference type="Proteomes" id="UP000001015">
    <property type="component" value="Chromosome"/>
</dbReference>
<dbReference type="GO" id="GO:0005829">
    <property type="term" value="C:cytosol"/>
    <property type="evidence" value="ECO:0007669"/>
    <property type="project" value="TreeGrafter"/>
</dbReference>
<dbReference type="GO" id="GO:0004014">
    <property type="term" value="F:adenosylmethionine decarboxylase activity"/>
    <property type="evidence" value="ECO:0007669"/>
    <property type="project" value="UniProtKB-UniRule"/>
</dbReference>
<dbReference type="GO" id="GO:0008295">
    <property type="term" value="P:spermidine biosynthetic process"/>
    <property type="evidence" value="ECO:0007669"/>
    <property type="project" value="UniProtKB-UniRule"/>
</dbReference>
<dbReference type="FunFam" id="3.60.90.10:FF:000005">
    <property type="entry name" value="Arginine decarboxylase proenzyme"/>
    <property type="match status" value="1"/>
</dbReference>
<dbReference type="Gene3D" id="3.60.90.10">
    <property type="entry name" value="S-adenosylmethionine decarboxylase"/>
    <property type="match status" value="1"/>
</dbReference>
<dbReference type="HAMAP" id="MF_00464">
    <property type="entry name" value="AdoMetDC_1"/>
    <property type="match status" value="1"/>
</dbReference>
<dbReference type="InterPro" id="IPR003826">
    <property type="entry name" value="AdoMetDC_fam_prok"/>
</dbReference>
<dbReference type="InterPro" id="IPR016067">
    <property type="entry name" value="S-AdoMet_deCO2ase_core"/>
</dbReference>
<dbReference type="InterPro" id="IPR017716">
    <property type="entry name" value="S-AdoMet_deCOase_pro-enz"/>
</dbReference>
<dbReference type="NCBIfam" id="TIGR03330">
    <property type="entry name" value="SAM_DCase_Bsu"/>
    <property type="match status" value="1"/>
</dbReference>
<dbReference type="PANTHER" id="PTHR33866">
    <property type="entry name" value="S-ADENOSYLMETHIONINE DECARBOXYLASE PROENZYME"/>
    <property type="match status" value="1"/>
</dbReference>
<dbReference type="PANTHER" id="PTHR33866:SF2">
    <property type="entry name" value="S-ADENOSYLMETHIONINE DECARBOXYLASE PROENZYME"/>
    <property type="match status" value="1"/>
</dbReference>
<dbReference type="Pfam" id="PF02675">
    <property type="entry name" value="AdoMet_dc"/>
    <property type="match status" value="1"/>
</dbReference>
<dbReference type="SUPFAM" id="SSF56276">
    <property type="entry name" value="S-adenosylmethionine decarboxylase"/>
    <property type="match status" value="1"/>
</dbReference>
<evidence type="ECO:0000255" key="1">
    <source>
        <dbReference type="HAMAP-Rule" id="MF_00464"/>
    </source>
</evidence>
<name>SPEH_SULTO</name>